<gene>
    <name evidence="6" type="primary">yggP</name>
    <name evidence="6" type="ordered locus">VF_A0062</name>
</gene>
<organism>
    <name type="scientific">Aliivibrio fischeri (strain ATCC 700601 / ES114)</name>
    <name type="common">Vibrio fischeri</name>
    <dbReference type="NCBI Taxonomy" id="312309"/>
    <lineage>
        <taxon>Bacteria</taxon>
        <taxon>Pseudomonadati</taxon>
        <taxon>Pseudomonadota</taxon>
        <taxon>Gammaproteobacteria</taxon>
        <taxon>Vibrionales</taxon>
        <taxon>Vibrionaceae</taxon>
        <taxon>Aliivibrio</taxon>
    </lineage>
</organism>
<dbReference type="EC" id="1.1.1.17" evidence="5"/>
<dbReference type="EMBL" id="CP000021">
    <property type="protein sequence ID" value="AAW87132.1"/>
    <property type="molecule type" value="Genomic_DNA"/>
</dbReference>
<dbReference type="RefSeq" id="WP_011262964.1">
    <property type="nucleotide sequence ID" value="NC_006841.2"/>
</dbReference>
<dbReference type="RefSeq" id="YP_206020.1">
    <property type="nucleotide sequence ID" value="NC_006841.2"/>
</dbReference>
<dbReference type="SMR" id="Q5E1G4"/>
<dbReference type="STRING" id="312309.VF_A0062"/>
<dbReference type="EnsemblBacteria" id="AAW87132">
    <property type="protein sequence ID" value="AAW87132"/>
    <property type="gene ID" value="VF_A0062"/>
</dbReference>
<dbReference type="GeneID" id="54165388"/>
<dbReference type="KEGG" id="vfi:VF_A0062"/>
<dbReference type="PATRIC" id="fig|312309.11.peg.2666"/>
<dbReference type="eggNOG" id="COG1063">
    <property type="taxonomic scope" value="Bacteria"/>
</dbReference>
<dbReference type="HOGENOM" id="CLU_054732_0_0_6"/>
<dbReference type="OrthoDB" id="9797931at2"/>
<dbReference type="Proteomes" id="UP000000537">
    <property type="component" value="Chromosome II"/>
</dbReference>
<dbReference type="GO" id="GO:0008926">
    <property type="term" value="F:mannitol-1-phosphate 5-dehydrogenase activity"/>
    <property type="evidence" value="ECO:0007669"/>
    <property type="project" value="UniProtKB-EC"/>
</dbReference>
<dbReference type="GO" id="GO:0046872">
    <property type="term" value="F:metal ion binding"/>
    <property type="evidence" value="ECO:0007669"/>
    <property type="project" value="UniProtKB-KW"/>
</dbReference>
<dbReference type="CDD" id="cd08238">
    <property type="entry name" value="sorbose_phosphate_red"/>
    <property type="match status" value="1"/>
</dbReference>
<dbReference type="Gene3D" id="3.90.180.10">
    <property type="entry name" value="Medium-chain alcohol dehydrogenases, catalytic domain"/>
    <property type="match status" value="1"/>
</dbReference>
<dbReference type="Gene3D" id="3.40.50.720">
    <property type="entry name" value="NAD(P)-binding Rossmann-like Domain"/>
    <property type="match status" value="1"/>
</dbReference>
<dbReference type="InterPro" id="IPR013149">
    <property type="entry name" value="ADH-like_C"/>
</dbReference>
<dbReference type="InterPro" id="IPR013154">
    <property type="entry name" value="ADH-like_N"/>
</dbReference>
<dbReference type="InterPro" id="IPR011032">
    <property type="entry name" value="GroES-like_sf"/>
</dbReference>
<dbReference type="InterPro" id="IPR036291">
    <property type="entry name" value="NAD(P)-bd_dom_sf"/>
</dbReference>
<dbReference type="InterPro" id="IPR050129">
    <property type="entry name" value="Zn_alcohol_dh"/>
</dbReference>
<dbReference type="PANTHER" id="PTHR43401">
    <property type="entry name" value="L-THREONINE 3-DEHYDROGENASE"/>
    <property type="match status" value="1"/>
</dbReference>
<dbReference type="PANTHER" id="PTHR43401:SF2">
    <property type="entry name" value="L-THREONINE 3-DEHYDROGENASE"/>
    <property type="match status" value="1"/>
</dbReference>
<dbReference type="Pfam" id="PF08240">
    <property type="entry name" value="ADH_N"/>
    <property type="match status" value="1"/>
</dbReference>
<dbReference type="Pfam" id="PF00107">
    <property type="entry name" value="ADH_zinc_N"/>
    <property type="match status" value="1"/>
</dbReference>
<dbReference type="SUPFAM" id="SSF50129">
    <property type="entry name" value="GroES-like"/>
    <property type="match status" value="1"/>
</dbReference>
<dbReference type="SUPFAM" id="SSF51735">
    <property type="entry name" value="NAD(P)-binding Rossmann-fold domains"/>
    <property type="match status" value="1"/>
</dbReference>
<comment type="function">
    <text evidence="2">Seems to be involved in mannitol utilization. Complements an E.coli mtlD deletion mutant.</text>
</comment>
<comment type="catalytic activity">
    <reaction evidence="5">
        <text>D-mannitol 1-phosphate + NAD(+) = beta-D-fructose 6-phosphate + NADH + H(+)</text>
        <dbReference type="Rhea" id="RHEA:19661"/>
        <dbReference type="ChEBI" id="CHEBI:15378"/>
        <dbReference type="ChEBI" id="CHEBI:57540"/>
        <dbReference type="ChEBI" id="CHEBI:57634"/>
        <dbReference type="ChEBI" id="CHEBI:57945"/>
        <dbReference type="ChEBI" id="CHEBI:61381"/>
        <dbReference type="EC" id="1.1.1.17"/>
    </reaction>
</comment>
<comment type="cofactor">
    <cofactor evidence="1">
        <name>Zn(2+)</name>
        <dbReference type="ChEBI" id="CHEBI:29105"/>
    </cofactor>
</comment>
<comment type="induction">
    <text evidence="2">Induced by mannitol.</text>
</comment>
<comment type="disruption phenotype">
    <text evidence="2">Deletion mutant cannot grow in minimal medium. Mutant fails to persist in the squid.</text>
</comment>
<comment type="similarity">
    <text evidence="4">Belongs to the zinc-containing alcohol dehydrogenase family.</text>
</comment>
<accession>Q5E1G4</accession>
<reference key="1">
    <citation type="journal article" date="2005" name="Proc. Natl. Acad. Sci. U.S.A.">
        <title>Complete genome sequence of Vibrio fischeri: a symbiotic bacterium with pathogenic congeners.</title>
        <authorList>
            <person name="Ruby E.G."/>
            <person name="Urbanowski M."/>
            <person name="Campbell J."/>
            <person name="Dunn A."/>
            <person name="Faini M."/>
            <person name="Gunsalus R."/>
            <person name="Lostroh P."/>
            <person name="Lupp C."/>
            <person name="McCann J."/>
            <person name="Millikan D."/>
            <person name="Schaefer A."/>
            <person name="Stabb E."/>
            <person name="Stevens A."/>
            <person name="Visick K."/>
            <person name="Whistler C."/>
            <person name="Greenberg E.P."/>
        </authorList>
    </citation>
    <scope>NUCLEOTIDE SEQUENCE [LARGE SCALE GENOMIC DNA]</scope>
    <source>
        <strain>ATCC 700601 / ES114</strain>
    </source>
</reference>
<reference key="2">
    <citation type="journal article" date="2017" name="J. Biol. Chem.">
        <title>Model-enabled gene search (MEGS) allows fast and direct discovery of enzymatic and transport gene functions in the marine bacterium Vibrio fischeri.</title>
        <authorList>
            <person name="Pan S."/>
            <person name="Nikolakakis K."/>
            <person name="Adamczyk P.A."/>
            <person name="Pan M."/>
            <person name="Ruby E.G."/>
            <person name="Reed J.L."/>
        </authorList>
    </citation>
    <scope>FUNCTION</scope>
    <scope>CATALYTIC ACTIVITY</scope>
    <scope>INDUCTION</scope>
    <scope>DISRUPTION PHENOTYPE</scope>
    <source>
        <strain>ATCC 700601 / ES114</strain>
    </source>
</reference>
<protein>
    <recommendedName>
        <fullName evidence="3">Mannitol-1-phosphate 5-dehydrogenase</fullName>
        <ecNumber evidence="5">1.1.1.17</ecNumber>
    </recommendedName>
</protein>
<sequence length="423" mass="45716">MTQTTAAVICGEKDIQLRTFELPSISADELLVKNISNSVCLSTYKAALLGSKHKRVPENIDEVPVITGHEYAGVIVEVGENLKDQFKAGDSFVLQPAMGLPTGYSAGYSYETFGGNATYSIIPKIAIDLGCVLPYDGSYYADASLAEPMSCIIGAFHASYHTTQFVYEHEMGIKEGGTLALLACAGPMGIGAIDYAINGPVKPRRIVVTDIDEDRLSRAESLIPVSAAKAQGIELIYVNTIEMEDPVTYLKSLNDDQGYDDVMVYAAVAQVLEQADALLGNDGCLNFFAGPTDKEFKVPFNFYNVHYESTHIVGTSGGSTGDMVESLELSAQGDINPSFMITHVGGLQAAPHTILNQLDIPGGKKLIYPHIDLPLTAIDNFASLAEQDPFFSELDAILAKNNYVWNQHAEKALLEFYDVSLSV</sequence>
<keyword id="KW-0479">Metal-binding</keyword>
<keyword id="KW-0520">NAD</keyword>
<keyword id="KW-0560">Oxidoreductase</keyword>
<keyword id="KW-1185">Reference proteome</keyword>
<keyword id="KW-0862">Zinc</keyword>
<name>M1PD_ALIF1</name>
<evidence type="ECO:0000250" key="1">
    <source>
        <dbReference type="UniProtKB" id="O58389"/>
    </source>
</evidence>
<evidence type="ECO:0000269" key="2">
    <source>
    </source>
</evidence>
<evidence type="ECO:0000303" key="3">
    <source>
    </source>
</evidence>
<evidence type="ECO:0000305" key="4"/>
<evidence type="ECO:0000305" key="5">
    <source>
    </source>
</evidence>
<evidence type="ECO:0000312" key="6">
    <source>
        <dbReference type="EMBL" id="AAW87132.1"/>
    </source>
</evidence>
<feature type="chain" id="PRO_0000440875" description="Mannitol-1-phosphate 5-dehydrogenase">
    <location>
        <begin position="1"/>
        <end position="423"/>
    </location>
</feature>
<feature type="binding site" evidence="1">
    <location>
        <position position="40"/>
    </location>
    <ligand>
        <name>Zn(2+)</name>
        <dbReference type="ChEBI" id="CHEBI:29105"/>
    </ligand>
</feature>
<feature type="binding site" evidence="1">
    <location>
        <position position="69"/>
    </location>
    <ligand>
        <name>Zn(2+)</name>
        <dbReference type="ChEBI" id="CHEBI:29105"/>
    </ligand>
</feature>
<feature type="binding site" evidence="1">
    <location>
        <position position="70"/>
    </location>
    <ligand>
        <name>Zn(2+)</name>
        <dbReference type="ChEBI" id="CHEBI:29105"/>
    </ligand>
</feature>
<proteinExistence type="evidence at protein level"/>